<comment type="function">
    <text evidence="1">Critical for the incorporation of phycoerythrin in the phycobilisome complex.</text>
</comment>
<comment type="subunit">
    <text evidence="3">Heteromer of 6 alpha, 6 beta and 1 gamma chains.</text>
</comment>
<comment type="subcellular location">
    <subcellularLocation>
        <location evidence="1">Plastid</location>
        <location evidence="1">Chloroplast thylakoid membrane</location>
        <topology evidence="1">Peripheral membrane protein</topology>
        <orientation evidence="1">Stromal side</orientation>
    </subcellularLocation>
    <text evidence="1">Forms the periphery of the phycobilisome rod.</text>
</comment>
<comment type="PTM">
    <text evidence="2 3">Contains four covalently linked bilin chromophores.</text>
</comment>
<evidence type="ECO:0000250" key="1">
    <source>
        <dbReference type="UniProtKB" id="P34784"/>
    </source>
</evidence>
<evidence type="ECO:0000269" key="2">
    <source>
    </source>
</evidence>
<evidence type="ECO:0000269" key="3">
    <source>
    </source>
</evidence>
<evidence type="ECO:0000303" key="4">
    <source>
    </source>
</evidence>
<evidence type="ECO:0000305" key="5"/>
<evidence type="ECO:0000312" key="6">
    <source>
        <dbReference type="PIR" id="I22565"/>
    </source>
</evidence>
<protein>
    <recommendedName>
        <fullName evidence="1 4">R-phycoerythrin gamma-1 chain, chloroplastic</fullName>
    </recommendedName>
</protein>
<name>PHEG1_GASCO</name>
<sequence length="71" mass="7459">SGYSGAALDFPVAPSLAGHYSLTNCGQPSGASKCAEGTVPQAAFEKGTCYRELYASSCHHEETQIFQYPAV</sequence>
<keyword id="KW-0042">Antenna complex</keyword>
<keyword id="KW-0089">Bile pigment</keyword>
<keyword id="KW-0150">Chloroplast</keyword>
<keyword id="KW-0157">Chromophore</keyword>
<keyword id="KW-0903">Direct protein sequencing</keyword>
<keyword id="KW-0249">Electron transport</keyword>
<keyword id="KW-0472">Membrane</keyword>
<keyword id="KW-0602">Photosynthesis</keyword>
<keyword id="KW-0605">Phycobilisome</keyword>
<keyword id="KW-0934">Plastid</keyword>
<keyword id="KW-0793">Thylakoid</keyword>
<keyword id="KW-0813">Transport</keyword>
<feature type="chain" id="PRO_0000345637" description="R-phycoerythrin gamma-1 chain, chloroplastic">
    <location>
        <begin position="1" status="less than"/>
        <end position="71" status="greater than"/>
    </location>
</feature>
<feature type="binding site" description="covalent" evidence="2 3">
    <location>
        <position position="25"/>
    </location>
    <ligand>
        <name>phycourobilin</name>
        <dbReference type="ChEBI" id="CHEBI:189062"/>
        <label>1</label>
    </ligand>
</feature>
<feature type="binding site" description="covalent" evidence="2 3">
    <location>
        <position position="34"/>
    </location>
    <ligand>
        <name>phycourobilin</name>
        <dbReference type="ChEBI" id="CHEBI:189062"/>
        <label>2</label>
    </ligand>
</feature>
<feature type="binding site" description="covalent" evidence="2 3">
    <location>
        <position position="49"/>
    </location>
    <ligand>
        <name>(2R,3E)-phycoerythrobilin</name>
        <dbReference type="ChEBI" id="CHEBI:85276"/>
    </ligand>
</feature>
<feature type="binding site" description="covalent" evidence="2 3">
    <location>
        <position position="58"/>
    </location>
    <ligand>
        <name>phycourobilin</name>
        <dbReference type="ChEBI" id="CHEBI:189062"/>
        <label>3</label>
    </ligand>
</feature>
<feature type="non-consecutive residues" evidence="4">
    <location>
        <begin position="33"/>
        <end position="34"/>
    </location>
</feature>
<feature type="non-consecutive residues" evidence="4">
    <location>
        <begin position="46"/>
        <end position="47"/>
    </location>
</feature>
<feature type="non-consecutive residues" evidence="4">
    <location>
        <begin position="51"/>
        <end position="52"/>
    </location>
</feature>
<feature type="non-terminal residue" evidence="4">
    <location>
        <position position="1"/>
    </location>
</feature>
<feature type="non-terminal residue" evidence="4">
    <location>
        <position position="71"/>
    </location>
</feature>
<dbReference type="PIR" id="F22565">
    <property type="entry name" value="F22565"/>
</dbReference>
<dbReference type="PIR" id="G22565">
    <property type="entry name" value="G22565"/>
</dbReference>
<dbReference type="PIR" id="H22565">
    <property type="entry name" value="H22565"/>
</dbReference>
<dbReference type="PIR" id="I22565">
    <property type="entry name" value="I22565"/>
</dbReference>
<dbReference type="GO" id="GO:0009535">
    <property type="term" value="C:chloroplast thylakoid membrane"/>
    <property type="evidence" value="ECO:0007669"/>
    <property type="project" value="UniProtKB-SubCell"/>
</dbReference>
<dbReference type="GO" id="GO:0030089">
    <property type="term" value="C:phycobilisome"/>
    <property type="evidence" value="ECO:0007669"/>
    <property type="project" value="UniProtKB-KW"/>
</dbReference>
<dbReference type="GO" id="GO:0015979">
    <property type="term" value="P:photosynthesis"/>
    <property type="evidence" value="ECO:0007669"/>
    <property type="project" value="UniProtKB-KW"/>
</dbReference>
<organism>
    <name type="scientific">Gastroclonium coulteri</name>
    <name type="common">Red alga</name>
    <dbReference type="NCBI Taxonomy" id="2773"/>
    <lineage>
        <taxon>Eukaryota</taxon>
        <taxon>Rhodophyta</taxon>
        <taxon>Florideophyceae</taxon>
        <taxon>Rhodymeniophycidae</taxon>
        <taxon>Rhodymeniales</taxon>
        <taxon>Champiaceae</taxon>
        <taxon>Gastroclonium</taxon>
    </lineage>
</organism>
<reference evidence="5 6" key="1">
    <citation type="journal article" date="1985" name="J. Biol. Chem.">
        <title>Characterization of the bilin attachment sites in R-phycoerythrin.</title>
        <authorList>
            <person name="Klotz A.V."/>
            <person name="Glazer A.N."/>
        </authorList>
    </citation>
    <scope>PROTEIN SEQUENCE</scope>
    <scope>SUBUNIT</scope>
    <scope>CHROMOPHORE-BINDING</scope>
</reference>
<reference evidence="5" key="2">
    <citation type="journal article" date="1985" name="J. Biol. Chem.">
        <title>Bilin attachment sites in the alpha, beta, and gamma subunits of R-phycoerythrin. Structural studies on singly and doubly linked phycourobilins.</title>
        <authorList>
            <person name="Nagy J.O."/>
            <person name="Bishop J.E."/>
            <person name="Klotz A.V."/>
            <person name="Glazer A.N."/>
            <person name="Rapoport H."/>
        </authorList>
    </citation>
    <scope>BILIN-BINDING</scope>
</reference>
<proteinExistence type="evidence at protein level"/>
<accession>Q7M269</accession>
<accession>Q7M268</accession>
<accession>Q7M270</accession>